<organism>
    <name type="scientific">Methanosarcina mazei (strain ATCC BAA-159 / DSM 3647 / Goe1 / Go1 / JCM 11833 / OCM 88)</name>
    <name type="common">Methanosarcina frisia</name>
    <dbReference type="NCBI Taxonomy" id="192952"/>
    <lineage>
        <taxon>Archaea</taxon>
        <taxon>Methanobacteriati</taxon>
        <taxon>Methanobacteriota</taxon>
        <taxon>Stenosarchaea group</taxon>
        <taxon>Methanomicrobia</taxon>
        <taxon>Methanosarcinales</taxon>
        <taxon>Methanosarcinaceae</taxon>
        <taxon>Methanosarcina</taxon>
    </lineage>
</organism>
<sequence length="161" mass="17087">MTSIVEALVPGGKANPGPPLGPALGPLGVNIKEVVEKINEKTRDYNGMQVPVKVIVDDKKNVEIEVGTPPTASLVMKELGIQKGSGNAGSEVVGNLTIPQVAKIARMKKEDVLSYDLKATMKEVMGTCVPMGVNVEGMKAKDCQKALDEGKFDDLLANEAW</sequence>
<reference key="1">
    <citation type="journal article" date="2002" name="J. Mol. Microbiol. Biotechnol.">
        <title>The genome of Methanosarcina mazei: evidence for lateral gene transfer between Bacteria and Archaea.</title>
        <authorList>
            <person name="Deppenmeier U."/>
            <person name="Johann A."/>
            <person name="Hartsch T."/>
            <person name="Merkl R."/>
            <person name="Schmitz R.A."/>
            <person name="Martinez-Arias R."/>
            <person name="Henne A."/>
            <person name="Wiezer A."/>
            <person name="Baeumer S."/>
            <person name="Jacobi C."/>
            <person name="Brueggemann H."/>
            <person name="Lienard T."/>
            <person name="Christmann A."/>
            <person name="Boemecke M."/>
            <person name="Steckel S."/>
            <person name="Bhattacharyya A."/>
            <person name="Lykidis A."/>
            <person name="Overbeek R."/>
            <person name="Klenk H.-P."/>
            <person name="Gunsalus R.P."/>
            <person name="Fritz H.-J."/>
            <person name="Gottschalk G."/>
        </authorList>
    </citation>
    <scope>NUCLEOTIDE SEQUENCE [LARGE SCALE GENOMIC DNA]</scope>
    <source>
        <strain>ATCC BAA-159 / DSM 3647 / Goe1 / Go1 / JCM 11833 / OCM 88</strain>
    </source>
</reference>
<gene>
    <name evidence="1" type="primary">rpl11</name>
    <name type="ordered locus">MM_1011</name>
</gene>
<accession>Q8PY53</accession>
<evidence type="ECO:0000255" key="1">
    <source>
        <dbReference type="HAMAP-Rule" id="MF_00736"/>
    </source>
</evidence>
<evidence type="ECO:0000305" key="2"/>
<proteinExistence type="inferred from homology"/>
<dbReference type="EMBL" id="AE008384">
    <property type="protein sequence ID" value="AAM30707.1"/>
    <property type="molecule type" value="Genomic_DNA"/>
</dbReference>
<dbReference type="RefSeq" id="WP_011032960.1">
    <property type="nucleotide sequence ID" value="NC_003901.1"/>
</dbReference>
<dbReference type="SMR" id="Q8PY53"/>
<dbReference type="KEGG" id="mma:MM_1011"/>
<dbReference type="PATRIC" id="fig|192952.21.peg.1185"/>
<dbReference type="eggNOG" id="arCOG04372">
    <property type="taxonomic scope" value="Archaea"/>
</dbReference>
<dbReference type="HOGENOM" id="CLU_074237_4_0_2"/>
<dbReference type="Proteomes" id="UP000000595">
    <property type="component" value="Chromosome"/>
</dbReference>
<dbReference type="GO" id="GO:0015934">
    <property type="term" value="C:large ribosomal subunit"/>
    <property type="evidence" value="ECO:0007669"/>
    <property type="project" value="TreeGrafter"/>
</dbReference>
<dbReference type="GO" id="GO:0070180">
    <property type="term" value="F:large ribosomal subunit rRNA binding"/>
    <property type="evidence" value="ECO:0007669"/>
    <property type="project" value="UniProtKB-UniRule"/>
</dbReference>
<dbReference type="GO" id="GO:0003735">
    <property type="term" value="F:structural constituent of ribosome"/>
    <property type="evidence" value="ECO:0007669"/>
    <property type="project" value="InterPro"/>
</dbReference>
<dbReference type="GO" id="GO:0006412">
    <property type="term" value="P:translation"/>
    <property type="evidence" value="ECO:0007669"/>
    <property type="project" value="UniProtKB-UniRule"/>
</dbReference>
<dbReference type="CDD" id="cd00349">
    <property type="entry name" value="Ribosomal_L11"/>
    <property type="match status" value="1"/>
</dbReference>
<dbReference type="FunFam" id="1.10.10.250:FF:000006">
    <property type="entry name" value="50S ribosomal protein L11"/>
    <property type="match status" value="1"/>
</dbReference>
<dbReference type="FunFam" id="3.30.1550.10:FF:000007">
    <property type="entry name" value="50S ribosomal protein L11"/>
    <property type="match status" value="1"/>
</dbReference>
<dbReference type="Gene3D" id="1.10.10.250">
    <property type="entry name" value="Ribosomal protein L11, C-terminal domain"/>
    <property type="match status" value="1"/>
</dbReference>
<dbReference type="Gene3D" id="3.30.1550.10">
    <property type="entry name" value="Ribosomal protein L11/L12, N-terminal domain"/>
    <property type="match status" value="1"/>
</dbReference>
<dbReference type="HAMAP" id="MF_00736">
    <property type="entry name" value="Ribosomal_uL11"/>
    <property type="match status" value="1"/>
</dbReference>
<dbReference type="InterPro" id="IPR000911">
    <property type="entry name" value="Ribosomal_uL11"/>
</dbReference>
<dbReference type="InterPro" id="IPR020783">
    <property type="entry name" value="Ribosomal_uL11_C"/>
</dbReference>
<dbReference type="InterPro" id="IPR036769">
    <property type="entry name" value="Ribosomal_uL11_C_sf"/>
</dbReference>
<dbReference type="InterPro" id="IPR020784">
    <property type="entry name" value="Ribosomal_uL11_N"/>
</dbReference>
<dbReference type="InterPro" id="IPR036796">
    <property type="entry name" value="Ribosomal_uL11_N_sf"/>
</dbReference>
<dbReference type="NCBIfam" id="NF002232">
    <property type="entry name" value="PRK01143.1"/>
    <property type="match status" value="1"/>
</dbReference>
<dbReference type="PANTHER" id="PTHR11661">
    <property type="entry name" value="60S RIBOSOMAL PROTEIN L12"/>
    <property type="match status" value="1"/>
</dbReference>
<dbReference type="PANTHER" id="PTHR11661:SF1">
    <property type="entry name" value="LARGE RIBOSOMAL SUBUNIT PROTEIN UL11M"/>
    <property type="match status" value="1"/>
</dbReference>
<dbReference type="Pfam" id="PF00298">
    <property type="entry name" value="Ribosomal_L11"/>
    <property type="match status" value="1"/>
</dbReference>
<dbReference type="Pfam" id="PF03946">
    <property type="entry name" value="Ribosomal_L11_N"/>
    <property type="match status" value="1"/>
</dbReference>
<dbReference type="SMART" id="SM00649">
    <property type="entry name" value="RL11"/>
    <property type="match status" value="1"/>
</dbReference>
<dbReference type="SUPFAM" id="SSF54747">
    <property type="entry name" value="Ribosomal L11/L12e N-terminal domain"/>
    <property type="match status" value="1"/>
</dbReference>
<dbReference type="SUPFAM" id="SSF46906">
    <property type="entry name" value="Ribosomal protein L11, C-terminal domain"/>
    <property type="match status" value="1"/>
</dbReference>
<feature type="chain" id="PRO_0000104437" description="Large ribosomal subunit protein uL11">
    <location>
        <begin position="1"/>
        <end position="161"/>
    </location>
</feature>
<name>RL11_METMA</name>
<keyword id="KW-0687">Ribonucleoprotein</keyword>
<keyword id="KW-0689">Ribosomal protein</keyword>
<keyword id="KW-0694">RNA-binding</keyword>
<keyword id="KW-0699">rRNA-binding</keyword>
<comment type="function">
    <text evidence="1">Forms part of the ribosomal stalk which helps the ribosome interact with GTP-bound translation factors.</text>
</comment>
<comment type="subunit">
    <text evidence="1">Part of the ribosomal stalk of the 50S ribosomal subunit. Interacts with L10 and the large rRNA to form the base of the stalk. L10 forms an elongated spine to which L12 dimers bind in a sequential fashion forming a multimeric L10(L12)X complex.</text>
</comment>
<comment type="similarity">
    <text evidence="1">Belongs to the universal ribosomal protein uL11 family.</text>
</comment>
<protein>
    <recommendedName>
        <fullName evidence="1">Large ribosomal subunit protein uL11</fullName>
    </recommendedName>
    <alternativeName>
        <fullName evidence="2">50S ribosomal protein L11</fullName>
    </alternativeName>
</protein>